<name>KCC1G_RAT</name>
<accession>Q7TNJ7</accession>
<accession>O08763</accession>
<accession>Q7TNJ6</accession>
<keyword id="KW-0021">Allosteric enzyme</keyword>
<keyword id="KW-0025">Alternative splicing</keyword>
<keyword id="KW-0067">ATP-binding</keyword>
<keyword id="KW-0112">Calmodulin-binding</keyword>
<keyword id="KW-1003">Cell membrane</keyword>
<keyword id="KW-0963">Cytoplasm</keyword>
<keyword id="KW-0333">Golgi apparatus</keyword>
<keyword id="KW-0418">Kinase</keyword>
<keyword id="KW-0449">Lipoprotein</keyword>
<keyword id="KW-0472">Membrane</keyword>
<keyword id="KW-0547">Nucleotide-binding</keyword>
<keyword id="KW-0636">Prenylation</keyword>
<keyword id="KW-1185">Reference proteome</keyword>
<keyword id="KW-0723">Serine/threonine-protein kinase</keyword>
<keyword id="KW-0808">Transferase</keyword>
<evidence type="ECO:0000250" key="1"/>
<evidence type="ECO:0000255" key="2">
    <source>
        <dbReference type="PROSITE-ProRule" id="PRU00159"/>
    </source>
</evidence>
<evidence type="ECO:0000255" key="3">
    <source>
        <dbReference type="PROSITE-ProRule" id="PRU10027"/>
    </source>
</evidence>
<evidence type="ECO:0000256" key="4">
    <source>
        <dbReference type="SAM" id="MobiDB-lite"/>
    </source>
</evidence>
<evidence type="ECO:0000269" key="5">
    <source>
    </source>
</evidence>
<evidence type="ECO:0000303" key="6">
    <source>
    </source>
</evidence>
<evidence type="ECO:0000305" key="7"/>
<sequence length="476" mass="53179">MGRKEEEDCSSWKKQTTNIRKTFIFMEVLGSGAFSEVFLVKQRVTGKLFALKCIKKSPAFRDSSLENEIAVLKRIKHENIVTLEDIYESTTHYYLVMQLVSGGELFDRILERGVYTEKDASLVIQQVLSAVKYLHENGIVHRDLKPENLLYLTPEENSKIMITDFGLSKMEQNGVMSTACGTPGYVAPEVLAQKPYSKAVDCWSIGVITYILLCGYPPFYEETESKLFEKIKEGYYEFESPFWDDISESAKDFICHLLEKDPNERYTCEKALRHPWIDGNTALHRDIYPSVSLQIQKNFAKSKWRQAFNAAAVVHHMRKLHMNLHSPSVRQEVENRPPVSPAPEVSRPGSHDSSITEAPILDPSTPLPALTRLPCSHSSRPSAPGGRSLNCLVNGSLRISSSLVPMQQGPLATGPCGCCSSCLNIGNKGKSSYCSEPTLFRKANKKQNFKSEVMVPVKAGGSTHCRAGQTGVCLIM</sequence>
<gene>
    <name type="primary">Camk1g</name>
    <name type="synonym">Camkig</name>
</gene>
<proteinExistence type="evidence at transcript level"/>
<organism>
    <name type="scientific">Rattus norvegicus</name>
    <name type="common">Rat</name>
    <dbReference type="NCBI Taxonomy" id="10116"/>
    <lineage>
        <taxon>Eukaryota</taxon>
        <taxon>Metazoa</taxon>
        <taxon>Chordata</taxon>
        <taxon>Craniata</taxon>
        <taxon>Vertebrata</taxon>
        <taxon>Euteleostomi</taxon>
        <taxon>Mammalia</taxon>
        <taxon>Eutheria</taxon>
        <taxon>Euarchontoglires</taxon>
        <taxon>Glires</taxon>
        <taxon>Rodentia</taxon>
        <taxon>Myomorpha</taxon>
        <taxon>Muroidea</taxon>
        <taxon>Muridae</taxon>
        <taxon>Murinae</taxon>
        <taxon>Rattus</taxon>
    </lineage>
</organism>
<dbReference type="EC" id="2.7.11.17"/>
<dbReference type="EMBL" id="AB101231">
    <property type="protein sequence ID" value="BAC80242.1"/>
    <property type="molecule type" value="mRNA"/>
</dbReference>
<dbReference type="EMBL" id="AB101232">
    <property type="protein sequence ID" value="BAC80243.1"/>
    <property type="molecule type" value="mRNA"/>
</dbReference>
<dbReference type="EMBL" id="D86557">
    <property type="protein sequence ID" value="BAA19880.1"/>
    <property type="molecule type" value="mRNA"/>
</dbReference>
<dbReference type="RefSeq" id="NP_001416643.1">
    <molecule id="Q7TNJ7-4"/>
    <property type="nucleotide sequence ID" value="NM_001429714.1"/>
</dbReference>
<dbReference type="RefSeq" id="NP_878262.1">
    <molecule id="Q7TNJ7-1"/>
    <property type="nucleotide sequence ID" value="NM_182842.1"/>
</dbReference>
<dbReference type="RefSeq" id="XP_006250532.1">
    <property type="nucleotide sequence ID" value="XM_006250470.3"/>
</dbReference>
<dbReference type="RefSeq" id="XP_063128062.1">
    <molecule id="Q7TNJ7-1"/>
    <property type="nucleotide sequence ID" value="XM_063271992.1"/>
</dbReference>
<dbReference type="SMR" id="Q7TNJ7"/>
<dbReference type="FunCoup" id="Q7TNJ7">
    <property type="interactions" value="800"/>
</dbReference>
<dbReference type="STRING" id="10116.ENSRNOP00000009158"/>
<dbReference type="PhosphoSitePlus" id="Q7TNJ7"/>
<dbReference type="jPOST" id="Q7TNJ7"/>
<dbReference type="PaxDb" id="10116-ENSRNOP00000009158"/>
<dbReference type="Ensembl" id="ENSRNOT00000009158.7">
    <molecule id="Q7TNJ7-1"/>
    <property type="protein sequence ID" value="ENSRNOP00000009158.3"/>
    <property type="gene ID" value="ENSRNOG00000006470.7"/>
</dbReference>
<dbReference type="Ensembl" id="ENSRNOT00000044161.3">
    <molecule id="Q7TNJ7-4"/>
    <property type="protein sequence ID" value="ENSRNOP00000041124.2"/>
    <property type="gene ID" value="ENSRNOG00000006470.7"/>
</dbReference>
<dbReference type="GeneID" id="171358"/>
<dbReference type="KEGG" id="rno:171358"/>
<dbReference type="AGR" id="RGD:621800"/>
<dbReference type="CTD" id="57172"/>
<dbReference type="RGD" id="621800">
    <property type="gene designation" value="Camk1g"/>
</dbReference>
<dbReference type="eggNOG" id="KOG0032">
    <property type="taxonomic scope" value="Eukaryota"/>
</dbReference>
<dbReference type="GeneTree" id="ENSGT00940000156872"/>
<dbReference type="HOGENOM" id="CLU_000288_63_0_1"/>
<dbReference type="InParanoid" id="Q7TNJ7"/>
<dbReference type="OMA" id="YAWKKNT"/>
<dbReference type="OrthoDB" id="40902at2759"/>
<dbReference type="PhylomeDB" id="Q7TNJ7"/>
<dbReference type="TreeFam" id="TF314166"/>
<dbReference type="BRENDA" id="2.7.11.17">
    <property type="organism ID" value="5301"/>
</dbReference>
<dbReference type="PRO" id="PR:Q7TNJ7"/>
<dbReference type="Proteomes" id="UP000002494">
    <property type="component" value="Chromosome 13"/>
</dbReference>
<dbReference type="Bgee" id="ENSRNOG00000006470">
    <property type="expression patterns" value="Expressed in cerebellum and 4 other cell types or tissues"/>
</dbReference>
<dbReference type="GO" id="GO:0005954">
    <property type="term" value="C:calcium- and calmodulin-dependent protein kinase complex"/>
    <property type="evidence" value="ECO:0000266"/>
    <property type="project" value="RGD"/>
</dbReference>
<dbReference type="GO" id="GO:0005737">
    <property type="term" value="C:cytoplasm"/>
    <property type="evidence" value="ECO:0000318"/>
    <property type="project" value="GO_Central"/>
</dbReference>
<dbReference type="GO" id="GO:0012505">
    <property type="term" value="C:endomembrane system"/>
    <property type="evidence" value="ECO:0000266"/>
    <property type="project" value="RGD"/>
</dbReference>
<dbReference type="GO" id="GO:0000139">
    <property type="term" value="C:Golgi membrane"/>
    <property type="evidence" value="ECO:0007669"/>
    <property type="project" value="UniProtKB-SubCell"/>
</dbReference>
<dbReference type="GO" id="GO:0005886">
    <property type="term" value="C:plasma membrane"/>
    <property type="evidence" value="ECO:0000266"/>
    <property type="project" value="RGD"/>
</dbReference>
<dbReference type="GO" id="GO:0005524">
    <property type="term" value="F:ATP binding"/>
    <property type="evidence" value="ECO:0007669"/>
    <property type="project" value="UniProtKB-KW"/>
</dbReference>
<dbReference type="GO" id="GO:0004683">
    <property type="term" value="F:calcium/calmodulin-dependent protein kinase activity"/>
    <property type="evidence" value="ECO:0000314"/>
    <property type="project" value="RGD"/>
</dbReference>
<dbReference type="GO" id="GO:0005516">
    <property type="term" value="F:calmodulin binding"/>
    <property type="evidence" value="ECO:0000318"/>
    <property type="project" value="GO_Central"/>
</dbReference>
<dbReference type="GO" id="GO:0106310">
    <property type="term" value="F:protein serine kinase activity"/>
    <property type="evidence" value="ECO:0007669"/>
    <property type="project" value="RHEA"/>
</dbReference>
<dbReference type="GO" id="GO:0019722">
    <property type="term" value="P:calcium-mediated signaling"/>
    <property type="evidence" value="ECO:0000303"/>
    <property type="project" value="RGD"/>
</dbReference>
<dbReference type="GO" id="GO:0007165">
    <property type="term" value="P:signal transduction"/>
    <property type="evidence" value="ECO:0000318"/>
    <property type="project" value="GO_Central"/>
</dbReference>
<dbReference type="CDD" id="cd14166">
    <property type="entry name" value="STKc_CaMKI_gamma"/>
    <property type="match status" value="1"/>
</dbReference>
<dbReference type="FunFam" id="1.10.510.10:FF:000026">
    <property type="entry name" value="Calcium/calmodulin-dependent protein kinase type 1"/>
    <property type="match status" value="1"/>
</dbReference>
<dbReference type="FunFam" id="3.30.200.20:FF:000331">
    <property type="entry name" value="Calcium/calmodulin-dependent protein kinase type 1G"/>
    <property type="match status" value="1"/>
</dbReference>
<dbReference type="Gene3D" id="3.30.200.20">
    <property type="entry name" value="Phosphorylase Kinase, domain 1"/>
    <property type="match status" value="1"/>
</dbReference>
<dbReference type="Gene3D" id="1.10.510.10">
    <property type="entry name" value="Transferase(Phosphotransferase) domain 1"/>
    <property type="match status" value="1"/>
</dbReference>
<dbReference type="InterPro" id="IPR011009">
    <property type="entry name" value="Kinase-like_dom_sf"/>
</dbReference>
<dbReference type="InterPro" id="IPR000719">
    <property type="entry name" value="Prot_kinase_dom"/>
</dbReference>
<dbReference type="InterPro" id="IPR017441">
    <property type="entry name" value="Protein_kinase_ATP_BS"/>
</dbReference>
<dbReference type="InterPro" id="IPR008271">
    <property type="entry name" value="Ser/Thr_kinase_AS"/>
</dbReference>
<dbReference type="PANTHER" id="PTHR24347">
    <property type="entry name" value="SERINE/THREONINE-PROTEIN KINASE"/>
    <property type="match status" value="1"/>
</dbReference>
<dbReference type="Pfam" id="PF00069">
    <property type="entry name" value="Pkinase"/>
    <property type="match status" value="1"/>
</dbReference>
<dbReference type="SMART" id="SM00220">
    <property type="entry name" value="S_TKc"/>
    <property type="match status" value="1"/>
</dbReference>
<dbReference type="SUPFAM" id="SSF56112">
    <property type="entry name" value="Protein kinase-like (PK-like)"/>
    <property type="match status" value="1"/>
</dbReference>
<dbReference type="PROSITE" id="PS00107">
    <property type="entry name" value="PROTEIN_KINASE_ATP"/>
    <property type="match status" value="1"/>
</dbReference>
<dbReference type="PROSITE" id="PS50011">
    <property type="entry name" value="PROTEIN_KINASE_DOM"/>
    <property type="match status" value="1"/>
</dbReference>
<dbReference type="PROSITE" id="PS00108">
    <property type="entry name" value="PROTEIN_KINASE_ST"/>
    <property type="match status" value="1"/>
</dbReference>
<comment type="function">
    <text evidence="1">Calcium/calmodulin-dependent protein kinase belonging to a proposed calcium-triggered signaling cascade. In vitro phosphorylates transcription factor CREB1 (By similarity).</text>
</comment>
<comment type="catalytic activity">
    <reaction evidence="5">
        <text>L-seryl-[protein] + ATP = O-phospho-L-seryl-[protein] + ADP + H(+)</text>
        <dbReference type="Rhea" id="RHEA:17989"/>
        <dbReference type="Rhea" id="RHEA-COMP:9863"/>
        <dbReference type="Rhea" id="RHEA-COMP:11604"/>
        <dbReference type="ChEBI" id="CHEBI:15378"/>
        <dbReference type="ChEBI" id="CHEBI:29999"/>
        <dbReference type="ChEBI" id="CHEBI:30616"/>
        <dbReference type="ChEBI" id="CHEBI:83421"/>
        <dbReference type="ChEBI" id="CHEBI:456216"/>
        <dbReference type="EC" id="2.7.11.17"/>
    </reaction>
</comment>
<comment type="catalytic activity">
    <reaction evidence="5">
        <text>L-threonyl-[protein] + ATP = O-phospho-L-threonyl-[protein] + ADP + H(+)</text>
        <dbReference type="Rhea" id="RHEA:46608"/>
        <dbReference type="Rhea" id="RHEA-COMP:11060"/>
        <dbReference type="Rhea" id="RHEA-COMP:11605"/>
        <dbReference type="ChEBI" id="CHEBI:15378"/>
        <dbReference type="ChEBI" id="CHEBI:30013"/>
        <dbReference type="ChEBI" id="CHEBI:30616"/>
        <dbReference type="ChEBI" id="CHEBI:61977"/>
        <dbReference type="ChEBI" id="CHEBI:456216"/>
        <dbReference type="EC" id="2.7.11.17"/>
    </reaction>
</comment>
<comment type="activity regulation">
    <text evidence="1">Activated by Ca(2+)/calmodulin. Binding of calmodulin is thought to result in a conformational change and leads to activation through phosphorylation by CAMKK1 (By similarity).</text>
</comment>
<comment type="subcellular location">
    <subcellularLocation>
        <location evidence="1">Cytoplasm</location>
    </subcellularLocation>
    <subcellularLocation>
        <location evidence="1">Golgi apparatus membrane</location>
        <topology evidence="1">Peripheral membrane protein</topology>
    </subcellularLocation>
    <subcellularLocation>
        <location evidence="1">Cell membrane</location>
        <topology evidence="1">Peripheral membrane protein</topology>
    </subcellularLocation>
</comment>
<comment type="alternative products">
    <event type="alternative splicing"/>
    <isoform>
        <id>Q7TNJ7-1</id>
        <name>1</name>
        <sequence type="displayed"/>
    </isoform>
    <isoform>
        <id>Q7TNJ7-4</id>
        <name>2</name>
        <sequence type="described" ref="VSP_012139"/>
    </isoform>
</comment>
<comment type="domain">
    <text evidence="1">The autoinhibitory domain overlaps with the calmodulin binding region and interacts in the inactive folded state with the catalytic domain as a pseudosubstrate.</text>
</comment>
<comment type="PTM">
    <text evidence="1">Prenylated on Cys-473.</text>
</comment>
<comment type="similarity">
    <text evidence="7">Belongs to the protein kinase superfamily. CAMK Ser/Thr protein kinase family. CaMK subfamily.</text>
</comment>
<protein>
    <recommendedName>
        <fullName>Calcium/calmodulin-dependent protein kinase type 1G</fullName>
        <ecNumber>2.7.11.17</ecNumber>
    </recommendedName>
    <alternativeName>
        <fullName>CaM kinase I gamma</fullName>
        <shortName>CaM kinase IG</shortName>
        <shortName>CaM-KI gamma</shortName>
        <shortName>CaMKI gamma</shortName>
        <shortName>CaMKIG</shortName>
    </alternativeName>
    <alternativeName>
        <fullName>CaMK-like CREB kinase III</fullName>
        <shortName>CLICK III</shortName>
    </alternativeName>
</protein>
<reference key="1">
    <citation type="journal article" date="2003" name="J. Neurochem.">
        <title>Cloning, characterization and expression of two alternatively splicing isoforms of Ca2+/calmodulin-dependent protein kinase I gamma in the rat brain.</title>
        <authorList>
            <person name="Nishimura H."/>
            <person name="Sakagami H."/>
            <person name="Uezu A."/>
            <person name="Fukunaga K."/>
            <person name="Watanabe M."/>
            <person name="Kondo H."/>
        </authorList>
    </citation>
    <scope>NUCLEOTIDE SEQUENCE [MRNA] (ISOFORMS 1 AND 2)</scope>
    <scope>ENZYME ACTIVITY</scope>
    <scope>TISSUE SPECIFICITY</scope>
    <scope>SUBCELLULAR LOCATION</scope>
    <source>
        <strain>Sprague-Dawley</strain>
        <tissue>Brain</tissue>
    </source>
</reference>
<reference key="2">
    <citation type="journal article" date="1997" name="Biochim. Biophys. Acta">
        <title>Isolation and comparison of rat cDNAs encoding Ca2+/calmodulin-dependent protein kinase I isoforms.</title>
        <authorList>
            <person name="Yokokura H."/>
            <person name="Terada O."/>
            <person name="Naito Y."/>
            <person name="Hidaka H."/>
        </authorList>
    </citation>
    <scope>NUCLEOTIDE SEQUENCE [MRNA] OF 1-309</scope>
    <source>
        <tissue>Brain</tissue>
    </source>
</reference>
<feature type="chain" id="PRO_0000086086" description="Calcium/calmodulin-dependent protein kinase type 1G">
    <location>
        <begin position="1"/>
        <end position="476"/>
    </location>
</feature>
<feature type="domain" description="Protein kinase" evidence="2">
    <location>
        <begin position="23"/>
        <end position="277"/>
    </location>
</feature>
<feature type="region of interest" description="Autoinhibitory domain">
    <location>
        <begin position="277"/>
        <end position="317"/>
    </location>
</feature>
<feature type="region of interest" description="Calmodulin-binding">
    <location>
        <begin position="297"/>
        <end position="318"/>
    </location>
</feature>
<feature type="region of interest" description="Disordered" evidence="4">
    <location>
        <begin position="326"/>
        <end position="387"/>
    </location>
</feature>
<feature type="active site" description="Proton acceptor" evidence="2 3">
    <location>
        <position position="143"/>
    </location>
</feature>
<feature type="binding site" evidence="2">
    <location>
        <begin position="29"/>
        <end position="37"/>
    </location>
    <ligand>
        <name>ATP</name>
        <dbReference type="ChEBI" id="CHEBI:30616"/>
    </ligand>
</feature>
<feature type="binding site" evidence="2">
    <location>
        <position position="52"/>
    </location>
    <ligand>
        <name>ATP</name>
        <dbReference type="ChEBI" id="CHEBI:30616"/>
    </ligand>
</feature>
<feature type="splice variant" id="VSP_012139" description="In isoform 2." evidence="6">
    <original>QAFNAAAVVHHMRKLHMNLHSPSVRQEVENRPPVSPAPEVSRPGSHDSSITEAPILDPSTPLPALTRLPCSHSSRPSAPGGRSLNCLVNGSLRISSSLVPMQQGPLATGPCGCCSSCLNIGNKGKSSYCSEPTLFRKANKKQNFKSEVMVPVKAGGSTHCRAGQTGVCLIM</original>
    <variation>ELQVRGHGTSESRWQHPLPGWADWGVSHNVIPGARVVFQETRLALLCLSKLASALRKGSSKAGIAEAAGLRQ</variation>
    <location>
        <begin position="306"/>
        <end position="476"/>
    </location>
</feature>